<comment type="function">
    <text evidence="2">Encapsidates the genome protecting it from nucleases. The encapsidated genomic RNA is termed the nucleocapsid (NC) and serves as template for transcription and replication. The NC have a helical organization. Seems to participate in the nuclear relocalization of host PABP1, thereby inhibiting host cellular translation.</text>
</comment>
<comment type="subunit">
    <text evidence="2">Homotetramer. Binds the viral genomic RNA. Interacts with host PABP1.</text>
</comment>
<comment type="subcellular location">
    <subcellularLocation>
        <location evidence="2">Virion</location>
    </subcellularLocation>
    <text evidence="2">Located inside the virion, complexed with the viral RNA.</text>
</comment>
<comment type="domain">
    <text evidence="2">The N-terminus and C-terminus are involved in homooligomerization and play an essential role in viral RNA synthesis.</text>
</comment>
<comment type="similarity">
    <text evidence="3">Belongs to the orthobunyavirus nucleocapsid protein family.</text>
</comment>
<organismHost>
    <name type="scientific">Cervidae</name>
    <name type="common">Deer</name>
    <dbReference type="NCBI Taxonomy" id="9850"/>
</organismHost>
<organismHost>
    <name type="scientific">Homo sapiens</name>
    <name type="common">Human</name>
    <dbReference type="NCBI Taxonomy" id="9606"/>
</organismHost>
<organismHost>
    <name type="scientific">Ochlerotatus triseriatus</name>
    <name type="common">Eastern treehole mosquito</name>
    <name type="synonym">Aedes triseriatus</name>
    <dbReference type="NCBI Taxonomy" id="7162"/>
</organismHost>
<organismHost>
    <name type="scientific">Tamias</name>
    <dbReference type="NCBI Taxonomy" id="13712"/>
</organismHost>
<protein>
    <recommendedName>
        <fullName>Nucleoprotein</fullName>
    </recommendedName>
    <alternativeName>
        <fullName>Nucleocapsid protein</fullName>
        <shortName>Protein N</shortName>
    </alternativeName>
</protein>
<gene>
    <name type="primary">N</name>
</gene>
<reference key="1">
    <citation type="submission" date="2002-07" db="EMBL/GenBank/DDBJ databases">
        <title>Complete sequence of the Bunyavirus, La Crosse virus, Human/78 strain.</title>
        <authorList>
            <person name="Hughes M.T."/>
            <person name="Kempf B.J."/>
            <person name="Blair C.D."/>
            <person name="Beaty B.J."/>
        </authorList>
    </citation>
    <scope>NUCLEOTIDE SEQUENCE [GENOMIC RNA]</scope>
</reference>
<reference key="2">
    <citation type="journal article" date="2007" name="Virol. J.">
        <title>Genome sequence analysis of La Crosse virus and in vitro and in vivo phenotypes.</title>
        <authorList>
            <person name="Bennett R.S."/>
            <person name="Ton D.R."/>
            <person name="Hanson C.T."/>
            <person name="Murphy B.R."/>
            <person name="Whitehead S.S."/>
        </authorList>
    </citation>
    <scope>NUCLEOTIDE SEQUENCE [GENOMIC RNA]</scope>
</reference>
<accession>Q8JPR0</accession>
<dbReference type="EMBL" id="AF528167">
    <property type="protein sequence ID" value="AAM94389.1"/>
    <property type="molecule type" value="Genomic_RNA"/>
</dbReference>
<dbReference type="EMBL" id="EF485033">
    <property type="protein sequence ID" value="ABQ12632.1"/>
    <property type="molecule type" value="Viral_cRNA"/>
</dbReference>
<dbReference type="RefSeq" id="NP_671970.1">
    <property type="nucleotide sequence ID" value="NC_004110.1"/>
</dbReference>
<dbReference type="SMR" id="Q8JPR0"/>
<dbReference type="IntAct" id="Q8JPR0">
    <property type="interactions" value="3"/>
</dbReference>
<dbReference type="GeneID" id="956556"/>
<dbReference type="KEGG" id="vg:956556"/>
<dbReference type="Proteomes" id="UP000008768">
    <property type="component" value="Genome"/>
</dbReference>
<dbReference type="Proteomes" id="UP000121242">
    <property type="component" value="Genome"/>
</dbReference>
<dbReference type="GO" id="GO:0019029">
    <property type="term" value="C:helical viral capsid"/>
    <property type="evidence" value="ECO:0007669"/>
    <property type="project" value="UniProtKB-KW"/>
</dbReference>
<dbReference type="GO" id="GO:1990904">
    <property type="term" value="C:ribonucleoprotein complex"/>
    <property type="evidence" value="ECO:0007669"/>
    <property type="project" value="UniProtKB-KW"/>
</dbReference>
<dbReference type="GO" id="GO:0019013">
    <property type="term" value="C:viral nucleocapsid"/>
    <property type="evidence" value="ECO:0007669"/>
    <property type="project" value="UniProtKB-KW"/>
</dbReference>
<dbReference type="GO" id="GO:0003723">
    <property type="term" value="F:RNA binding"/>
    <property type="evidence" value="ECO:0007669"/>
    <property type="project" value="UniProtKB-KW"/>
</dbReference>
<dbReference type="GO" id="GO:0039657">
    <property type="term" value="P:symbiont-mediated suppression of host gene expression"/>
    <property type="evidence" value="ECO:0007669"/>
    <property type="project" value="UniProtKB-KW"/>
</dbReference>
<dbReference type="Gene3D" id="1.20.142.20">
    <property type="match status" value="1"/>
</dbReference>
<dbReference type="Gene3D" id="1.10.472.180">
    <property type="entry name" value="Bunyavirus nucleocapsid (N) protein, C-terminal domain"/>
    <property type="match status" value="1"/>
</dbReference>
<dbReference type="InterPro" id="IPR001784">
    <property type="entry name" value="Bunya_nucleocap"/>
</dbReference>
<dbReference type="InterPro" id="IPR043011">
    <property type="entry name" value="Bunya_nucleocap_C"/>
</dbReference>
<dbReference type="InterPro" id="IPR043012">
    <property type="entry name" value="Bunya_nucleocap_N"/>
</dbReference>
<dbReference type="Pfam" id="PF00952">
    <property type="entry name" value="Bunya_nucleocap"/>
    <property type="match status" value="1"/>
</dbReference>
<dbReference type="PIRSF" id="PIRSF003947">
    <property type="entry name" value="N_OrthobunV"/>
    <property type="match status" value="1"/>
</dbReference>
<sequence length="235" mass="26556">MSDLVFYDVASTGANGFDPDAGYMDFCVKNAELLNLAAVRIFFLNAAKAKAALSRKPERKANPKFGEWQVEVINNHFPGNRNNPIGNNDLTIHRLSGYLARWVLDQYNENDDESQHELIRTTIINPIAESNGVGWDSGPEIYLSFFPGTEMFLETFKFYPLTIGIHRVKQGMMDPQYLKKALRQRYGTLTADKWMSQKVAAIAKSLKDVEQLKWGKGGLSDTAKTFLQKFGIRLP</sequence>
<keyword id="KW-0167">Capsid protein</keyword>
<keyword id="KW-1262">Eukaryotic host gene expression shutoff by virus</keyword>
<keyword id="KW-1193">Eukaryotic host translation shutoff by virus</keyword>
<keyword id="KW-1139">Helical capsid protein</keyword>
<keyword id="KW-1190">Host gene expression shutoff by virus</keyword>
<keyword id="KW-0945">Host-virus interaction</keyword>
<keyword id="KW-1185">Reference proteome</keyword>
<keyword id="KW-0687">Ribonucleoprotein</keyword>
<keyword id="KW-0694">RNA-binding</keyword>
<keyword id="KW-0543">Viral nucleoprotein</keyword>
<keyword id="KW-0946">Virion</keyword>
<name>NCAP_BUNL8</name>
<organism>
    <name type="scientific">Bunyavirus La Crosse (isolate Human/United States/L78/1978)</name>
    <dbReference type="NCBI Taxonomy" id="796210"/>
    <lineage>
        <taxon>Viruses</taxon>
        <taxon>Riboviria</taxon>
        <taxon>Orthornavirae</taxon>
        <taxon>Negarnaviricota</taxon>
        <taxon>Polyploviricotina</taxon>
        <taxon>Ellioviricetes</taxon>
        <taxon>Bunyavirales</taxon>
        <taxon>Peribunyaviridae</taxon>
        <taxon>Orthobunyavirus</taxon>
        <taxon>Orthobunyavirus lacrosseense</taxon>
    </lineage>
</organism>
<evidence type="ECO:0000250" key="1">
    <source>
        <dbReference type="UniProtKB" id="P04873"/>
    </source>
</evidence>
<evidence type="ECO:0000250" key="2">
    <source>
        <dbReference type="UniProtKB" id="P16495"/>
    </source>
</evidence>
<evidence type="ECO:0000305" key="3"/>
<proteinExistence type="inferred from homology"/>
<feature type="chain" id="PRO_0000397188" description="Nucleoprotein">
    <location>
        <begin position="1"/>
        <end position="235"/>
    </location>
</feature>
<feature type="binding site" evidence="2">
    <location>
        <position position="18"/>
    </location>
    <ligand>
        <name>RNA</name>
        <dbReference type="ChEBI" id="CHEBI:33697"/>
    </ligand>
</feature>
<feature type="binding site" evidence="1">
    <location>
        <position position="47"/>
    </location>
    <ligand>
        <name>RNA</name>
        <dbReference type="ChEBI" id="CHEBI:33697"/>
    </ligand>
</feature>
<feature type="binding site" evidence="2">
    <location>
        <position position="50"/>
    </location>
    <ligand>
        <name>RNA</name>
        <dbReference type="ChEBI" id="CHEBI:33697"/>
    </ligand>
</feature>
<feature type="binding site" evidence="1">
    <location>
        <position position="75"/>
    </location>
    <ligand>
        <name>RNA</name>
        <dbReference type="ChEBI" id="CHEBI:33697"/>
    </ligand>
</feature>
<feature type="binding site" evidence="1">
    <location>
        <position position="76"/>
    </location>
    <ligand>
        <name>RNA</name>
        <dbReference type="ChEBI" id="CHEBI:33697"/>
    </ligand>
</feature>
<feature type="binding site" evidence="1">
    <location>
        <position position="81"/>
    </location>
    <ligand>
        <name>RNA</name>
        <dbReference type="ChEBI" id="CHEBI:33697"/>
    </ligand>
</feature>
<feature type="binding site" evidence="2">
    <location>
        <position position="94"/>
    </location>
    <ligand>
        <name>RNA</name>
        <dbReference type="ChEBI" id="CHEBI:33697"/>
    </ligand>
</feature>
<feature type="binding site" evidence="1">
    <location>
        <position position="124"/>
    </location>
    <ligand>
        <name>RNA</name>
        <dbReference type="ChEBI" id="CHEBI:33697"/>
    </ligand>
</feature>
<feature type="binding site" evidence="1">
    <location>
        <position position="126"/>
    </location>
    <ligand>
        <name>RNA</name>
        <dbReference type="ChEBI" id="CHEBI:33697"/>
    </ligand>
</feature>
<feature type="binding site" evidence="1">
    <location>
        <position position="129"/>
    </location>
    <ligand>
        <name>RNA</name>
        <dbReference type="ChEBI" id="CHEBI:33697"/>
    </ligand>
</feature>
<feature type="binding site" evidence="1">
    <location>
        <position position="167"/>
    </location>
    <ligand>
        <name>RNA</name>
        <dbReference type="ChEBI" id="CHEBI:33697"/>
    </ligand>
</feature>
<feature type="binding site" evidence="2">
    <location>
        <position position="177"/>
    </location>
    <ligand>
        <name>RNA</name>
        <dbReference type="ChEBI" id="CHEBI:33697"/>
    </ligand>
</feature>
<feature type="binding site" evidence="2">
    <location>
        <position position="183"/>
    </location>
    <ligand>
        <name>RNA</name>
        <dbReference type="ChEBI" id="CHEBI:33697"/>
    </ligand>
</feature>
<feature type="binding site" evidence="2">
    <location>
        <position position="184"/>
    </location>
    <ligand>
        <name>RNA</name>
        <dbReference type="ChEBI" id="CHEBI:33697"/>
    </ligand>
</feature>
<feature type="binding site" evidence="2">
    <location>
        <position position="185"/>
    </location>
    <ligand>
        <name>RNA</name>
        <dbReference type="ChEBI" id="CHEBI:33697"/>
    </ligand>
</feature>